<evidence type="ECO:0000255" key="1">
    <source>
        <dbReference type="HAMAP-Rule" id="MF_00382"/>
    </source>
</evidence>
<evidence type="ECO:0000305" key="2"/>
<keyword id="KW-0687">Ribonucleoprotein</keyword>
<keyword id="KW-0689">Ribosomal protein</keyword>
<keyword id="KW-0694">RNA-binding</keyword>
<keyword id="KW-0699">rRNA-binding</keyword>
<sequence length="119" mass="13644">MPRVKRGVTARARHKKIINLAKGYRGRRNNVYRIAKQAVMRAGQYAYRDRRNKKRVFRALWITRINAAVRQHDMTYSVFINGLKKASIELDRKVLADMAVFDKAAFAAIVKQVKAAVAA</sequence>
<feature type="chain" id="PRO_1000048936" description="Large ribosomal subunit protein bL20">
    <location>
        <begin position="1"/>
        <end position="119"/>
    </location>
</feature>
<reference key="1">
    <citation type="submission" date="2006-05" db="EMBL/GenBank/DDBJ databases">
        <title>Complete sequence of chromosome 1 of Burkholderia cenocepacia AU 1054.</title>
        <authorList>
            <consortium name="US DOE Joint Genome Institute"/>
            <person name="Copeland A."/>
            <person name="Lucas S."/>
            <person name="Lapidus A."/>
            <person name="Barry K."/>
            <person name="Detter J.C."/>
            <person name="Glavina del Rio T."/>
            <person name="Hammon N."/>
            <person name="Israni S."/>
            <person name="Dalin E."/>
            <person name="Tice H."/>
            <person name="Pitluck S."/>
            <person name="Chain P."/>
            <person name="Malfatti S."/>
            <person name="Shin M."/>
            <person name="Vergez L."/>
            <person name="Schmutz J."/>
            <person name="Larimer F."/>
            <person name="Land M."/>
            <person name="Hauser L."/>
            <person name="Kyrpides N."/>
            <person name="Lykidis A."/>
            <person name="LiPuma J.J."/>
            <person name="Konstantinidis K."/>
            <person name="Tiedje J.M."/>
            <person name="Richardson P."/>
        </authorList>
    </citation>
    <scope>NUCLEOTIDE SEQUENCE [LARGE SCALE GENOMIC DNA]</scope>
    <source>
        <strain>AU 1054</strain>
    </source>
</reference>
<name>RL20_BURO1</name>
<dbReference type="EMBL" id="CP000378">
    <property type="protein sequence ID" value="ABF75905.1"/>
    <property type="molecule type" value="Genomic_DNA"/>
</dbReference>
<dbReference type="SMR" id="Q1BWV0"/>
<dbReference type="HOGENOM" id="CLU_123265_0_1_4"/>
<dbReference type="GO" id="GO:1990904">
    <property type="term" value="C:ribonucleoprotein complex"/>
    <property type="evidence" value="ECO:0007669"/>
    <property type="project" value="UniProtKB-KW"/>
</dbReference>
<dbReference type="GO" id="GO:0005840">
    <property type="term" value="C:ribosome"/>
    <property type="evidence" value="ECO:0007669"/>
    <property type="project" value="UniProtKB-KW"/>
</dbReference>
<dbReference type="GO" id="GO:0019843">
    <property type="term" value="F:rRNA binding"/>
    <property type="evidence" value="ECO:0007669"/>
    <property type="project" value="UniProtKB-UniRule"/>
</dbReference>
<dbReference type="GO" id="GO:0003735">
    <property type="term" value="F:structural constituent of ribosome"/>
    <property type="evidence" value="ECO:0007669"/>
    <property type="project" value="InterPro"/>
</dbReference>
<dbReference type="GO" id="GO:0000027">
    <property type="term" value="P:ribosomal large subunit assembly"/>
    <property type="evidence" value="ECO:0007669"/>
    <property type="project" value="UniProtKB-UniRule"/>
</dbReference>
<dbReference type="GO" id="GO:0006412">
    <property type="term" value="P:translation"/>
    <property type="evidence" value="ECO:0007669"/>
    <property type="project" value="InterPro"/>
</dbReference>
<dbReference type="CDD" id="cd07026">
    <property type="entry name" value="Ribosomal_L20"/>
    <property type="match status" value="1"/>
</dbReference>
<dbReference type="FunFam" id="1.10.1900.20:FF:000001">
    <property type="entry name" value="50S ribosomal protein L20"/>
    <property type="match status" value="1"/>
</dbReference>
<dbReference type="Gene3D" id="6.10.160.10">
    <property type="match status" value="1"/>
</dbReference>
<dbReference type="Gene3D" id="1.10.1900.20">
    <property type="entry name" value="Ribosomal protein L20"/>
    <property type="match status" value="1"/>
</dbReference>
<dbReference type="HAMAP" id="MF_00382">
    <property type="entry name" value="Ribosomal_bL20"/>
    <property type="match status" value="1"/>
</dbReference>
<dbReference type="InterPro" id="IPR005813">
    <property type="entry name" value="Ribosomal_bL20"/>
</dbReference>
<dbReference type="InterPro" id="IPR049946">
    <property type="entry name" value="RIBOSOMAL_L20_CS"/>
</dbReference>
<dbReference type="InterPro" id="IPR035566">
    <property type="entry name" value="Ribosomal_protein_bL20_C"/>
</dbReference>
<dbReference type="NCBIfam" id="TIGR01032">
    <property type="entry name" value="rplT_bact"/>
    <property type="match status" value="1"/>
</dbReference>
<dbReference type="PANTHER" id="PTHR10986">
    <property type="entry name" value="39S RIBOSOMAL PROTEIN L20"/>
    <property type="match status" value="1"/>
</dbReference>
<dbReference type="Pfam" id="PF00453">
    <property type="entry name" value="Ribosomal_L20"/>
    <property type="match status" value="1"/>
</dbReference>
<dbReference type="PRINTS" id="PR00062">
    <property type="entry name" value="RIBOSOMALL20"/>
</dbReference>
<dbReference type="SUPFAM" id="SSF74731">
    <property type="entry name" value="Ribosomal protein L20"/>
    <property type="match status" value="1"/>
</dbReference>
<dbReference type="PROSITE" id="PS00937">
    <property type="entry name" value="RIBOSOMAL_L20"/>
    <property type="match status" value="1"/>
</dbReference>
<comment type="function">
    <text evidence="1">Binds directly to 23S ribosomal RNA and is necessary for the in vitro assembly process of the 50S ribosomal subunit. It is not involved in the protein synthesizing functions of that subunit.</text>
</comment>
<comment type="similarity">
    <text evidence="1">Belongs to the bacterial ribosomal protein bL20 family.</text>
</comment>
<proteinExistence type="inferred from homology"/>
<organism>
    <name type="scientific">Burkholderia orbicola (strain AU 1054)</name>
    <dbReference type="NCBI Taxonomy" id="331271"/>
    <lineage>
        <taxon>Bacteria</taxon>
        <taxon>Pseudomonadati</taxon>
        <taxon>Pseudomonadota</taxon>
        <taxon>Betaproteobacteria</taxon>
        <taxon>Burkholderiales</taxon>
        <taxon>Burkholderiaceae</taxon>
        <taxon>Burkholderia</taxon>
        <taxon>Burkholderia cepacia complex</taxon>
        <taxon>Burkholderia orbicola</taxon>
    </lineage>
</organism>
<accession>Q1BWV0</accession>
<protein>
    <recommendedName>
        <fullName evidence="1">Large ribosomal subunit protein bL20</fullName>
    </recommendedName>
    <alternativeName>
        <fullName evidence="2">50S ribosomal protein L20</fullName>
    </alternativeName>
</protein>
<gene>
    <name evidence="1" type="primary">rplT</name>
    <name type="ordered locus">Bcen_0996</name>
</gene>